<reference key="1">
    <citation type="journal article" date="2020" name="Nat. Commun.">
        <title>A comparative genomics study of 23 Aspergillus species from section Flavi.</title>
        <authorList>
            <person name="Kjaerboelling I."/>
            <person name="Vesth T."/>
            <person name="Frisvad J.C."/>
            <person name="Nybo J.L."/>
            <person name="Theobald S."/>
            <person name="Kildgaard S."/>
            <person name="Petersen T.I."/>
            <person name="Kuo A."/>
            <person name="Sato A."/>
            <person name="Lyhne E.K."/>
            <person name="Kogle M.E."/>
            <person name="Wiebenga A."/>
            <person name="Kun R.S."/>
            <person name="Lubbers R.J.M."/>
            <person name="Maekelae M.R."/>
            <person name="Barry K."/>
            <person name="Chovatia M."/>
            <person name="Clum A."/>
            <person name="Daum C."/>
            <person name="Haridas S."/>
            <person name="He G."/>
            <person name="LaButti K."/>
            <person name="Lipzen A."/>
            <person name="Mondo S."/>
            <person name="Pangilinan J."/>
            <person name="Riley R."/>
            <person name="Salamov A."/>
            <person name="Simmons B.A."/>
            <person name="Magnuson J.K."/>
            <person name="Henrissat B."/>
            <person name="Mortensen U.H."/>
            <person name="Larsen T.O."/>
            <person name="de Vries R.P."/>
            <person name="Grigoriev I.V."/>
            <person name="Machida M."/>
            <person name="Baker S.E."/>
            <person name="Andersen M.R."/>
        </authorList>
    </citation>
    <scope>NUCLEOTIDE SEQUENCE [LARGE SCALE GENOMIC DNA]</scope>
    <source>
        <strain>CBS 117626</strain>
    </source>
</reference>
<reference key="2">
    <citation type="journal article" date="2018" name="Front. Bioeng. Biotechnol.">
        <title>Analysis of the Transcriptome in Aspergillus tamarii During Enzymatic Degradation of Sugarcane Bagasse.</title>
        <authorList>
            <person name="Midorikawa G.E.O."/>
            <person name="Correa C.L."/>
            <person name="Noronha E.F."/>
            <person name="Filho E.X.F."/>
            <person name="Togawa R.C."/>
            <person name="Costa M.M.D.C."/>
            <person name="Silva-Junior O.B."/>
            <person name="Grynberg P."/>
            <person name="Miller R.N.G."/>
        </authorList>
    </citation>
    <scope>INDUCTION</scope>
</reference>
<reference key="3">
    <citation type="journal article" date="2020" name="PLoS ONE">
        <title>Characterization of two family AA9 LPMOs from Aspergillus tamarii with distinct activities on xyloglucan reveals structural differences linked to cleavage specificity.</title>
        <authorList>
            <person name="Monclaro A.V."/>
            <person name="Petrovic D.M."/>
            <person name="Alves G.S.C."/>
            <person name="Costa M.M.C."/>
            <person name="Midorikawa G.E.O."/>
            <person name="Miller R.N.G."/>
            <person name="Filho E.X.F."/>
            <person name="Eijsink V.G.H."/>
            <person name="Varnai A."/>
        </authorList>
    </citation>
    <scope>FUNCTION</scope>
    <scope>CATALYTIC ACTIVITY</scope>
</reference>
<organism>
    <name type="scientific">Aspergillus tamarii</name>
    <dbReference type="NCBI Taxonomy" id="41984"/>
    <lineage>
        <taxon>Eukaryota</taxon>
        <taxon>Fungi</taxon>
        <taxon>Dikarya</taxon>
        <taxon>Ascomycota</taxon>
        <taxon>Pezizomycotina</taxon>
        <taxon>Eurotiomycetes</taxon>
        <taxon>Eurotiomycetidae</taxon>
        <taxon>Eurotiales</taxon>
        <taxon>Aspergillaceae</taxon>
        <taxon>Aspergillus</taxon>
        <taxon>Aspergillus subgen. Circumdati</taxon>
    </lineage>
</organism>
<evidence type="ECO:0000250" key="1">
    <source>
        <dbReference type="UniProtKB" id="Q1K8B6"/>
    </source>
</evidence>
<evidence type="ECO:0000250" key="2">
    <source>
        <dbReference type="UniProtKB" id="Q4WP32"/>
    </source>
</evidence>
<evidence type="ECO:0000255" key="3"/>
<evidence type="ECO:0000269" key="4">
    <source>
    </source>
</evidence>
<evidence type="ECO:0000303" key="5">
    <source>
    </source>
</evidence>
<evidence type="ECO:0000305" key="6"/>
<evidence type="ECO:0000305" key="7">
    <source>
    </source>
</evidence>
<accession>A0A5N6V3W5</accession>
<sequence>MFRSALFLLLAPLALSHTTFTTLYVDEVNQGDGTCVRMNRDANTVTYPIEPLSSKDIACGKDGEKAVSRVCPAKANSLLTFEFRAWADGAQPGSIDISHKGPCAVYMKKVDDATADNNAAGDGWFKIWHTGYDESTEKWCTEKLIDNNGFLSVRVPSDIEQGYYLVRTELLALHAASDAPPDPQFYVNCAQIFVQGGGSAKPETVSIGEGYYSLDSPGVKYNIYEKPLQLPYPIPGPTVYESKGVEERSVCPAQKRTATAQNKGLKPAGCILQRDNWCGFEVPDYSDENGCWASSKKCWDQSDVCYKTALPTGISACDIWMTKCNGIDEACNSGDFNGPPNKGKVLTPEPKKLAGSTQVFKRDVRKYKKWTA</sequence>
<protein>
    <recommendedName>
        <fullName evidence="5">AA9 family lytic polysaccharide monooxygenase C</fullName>
        <shortName evidence="5">AtAA9C</shortName>
        <ecNumber evidence="7">1.14.99.56</ecNumber>
    </recommendedName>
    <alternativeName>
        <fullName evidence="6">Cellulase AA9A</fullName>
    </alternativeName>
    <alternativeName>
        <fullName evidence="6">Endo-beta-1,4-glucanase AA9AC</fullName>
        <shortName evidence="6">Endoglucanase AA9C</shortName>
    </alternativeName>
    <alternativeName>
        <fullName evidence="6">Glycosyl hydrolase 61 family protein AA9C</fullName>
    </alternativeName>
</protein>
<dbReference type="EC" id="1.14.99.56" evidence="7"/>
<dbReference type="EMBL" id="ML738600">
    <property type="protein sequence ID" value="KAE8165463.1"/>
    <property type="molecule type" value="Genomic_DNA"/>
</dbReference>
<dbReference type="SMR" id="A0A5N6V3W5"/>
<dbReference type="OrthoDB" id="5985073at2759"/>
<dbReference type="Proteomes" id="UP000326950">
    <property type="component" value="Unassembled WGS sequence"/>
</dbReference>
<dbReference type="GO" id="GO:0005576">
    <property type="term" value="C:extracellular region"/>
    <property type="evidence" value="ECO:0007669"/>
    <property type="project" value="UniProtKB-SubCell"/>
</dbReference>
<dbReference type="GO" id="GO:0046872">
    <property type="term" value="F:metal ion binding"/>
    <property type="evidence" value="ECO:0007669"/>
    <property type="project" value="UniProtKB-KW"/>
</dbReference>
<dbReference type="GO" id="GO:0004497">
    <property type="term" value="F:monooxygenase activity"/>
    <property type="evidence" value="ECO:0007669"/>
    <property type="project" value="UniProtKB-KW"/>
</dbReference>
<dbReference type="GO" id="GO:0030245">
    <property type="term" value="P:cellulose catabolic process"/>
    <property type="evidence" value="ECO:0007669"/>
    <property type="project" value="UniProtKB-KW"/>
</dbReference>
<dbReference type="CDD" id="cd21175">
    <property type="entry name" value="LPMO_AA9"/>
    <property type="match status" value="1"/>
</dbReference>
<dbReference type="Gene3D" id="2.70.50.70">
    <property type="match status" value="1"/>
</dbReference>
<dbReference type="InterPro" id="IPR049892">
    <property type="entry name" value="AA9"/>
</dbReference>
<dbReference type="InterPro" id="IPR005103">
    <property type="entry name" value="AA9_LPMO"/>
</dbReference>
<dbReference type="PANTHER" id="PTHR33353:SF32">
    <property type="entry name" value="ENDO-BETA-1,4-GLUCANASE D"/>
    <property type="match status" value="1"/>
</dbReference>
<dbReference type="PANTHER" id="PTHR33353">
    <property type="entry name" value="PUTATIVE (AFU_ORTHOLOGUE AFUA_1G12560)-RELATED"/>
    <property type="match status" value="1"/>
</dbReference>
<dbReference type="Pfam" id="PF03443">
    <property type="entry name" value="AA9"/>
    <property type="match status" value="1"/>
</dbReference>
<feature type="signal peptide" evidence="3">
    <location>
        <begin position="1"/>
        <end position="16"/>
    </location>
</feature>
<feature type="chain" id="PRO_5024912980" description="AA9 family lytic polysaccharide monooxygenase C">
    <location>
        <begin position="17"/>
        <end position="372"/>
    </location>
</feature>
<feature type="binding site" evidence="2">
    <location>
        <position position="17"/>
    </location>
    <ligand>
        <name>Cu(2+)</name>
        <dbReference type="ChEBI" id="CHEBI:29036"/>
        <note>catalytic</note>
    </ligand>
</feature>
<feature type="binding site" evidence="2">
    <location>
        <position position="99"/>
    </location>
    <ligand>
        <name>Cu(2+)</name>
        <dbReference type="ChEBI" id="CHEBI:29036"/>
        <note>catalytic</note>
    </ligand>
</feature>
<feature type="binding site" evidence="1">
    <location>
        <position position="174"/>
    </location>
    <ligand>
        <name>O2</name>
        <dbReference type="ChEBI" id="CHEBI:15379"/>
    </ligand>
</feature>
<feature type="binding site" evidence="1">
    <location>
        <position position="184"/>
    </location>
    <ligand>
        <name>O2</name>
        <dbReference type="ChEBI" id="CHEBI:15379"/>
    </ligand>
</feature>
<feature type="binding site" evidence="2">
    <location>
        <position position="186"/>
    </location>
    <ligand>
        <name>Cu(2+)</name>
        <dbReference type="ChEBI" id="CHEBI:29036"/>
        <note>catalytic</note>
    </ligand>
</feature>
<feature type="disulfide bond" evidence="2">
    <location>
        <begin position="59"/>
        <end position="189"/>
    </location>
</feature>
<gene>
    <name type="ORF">BDV40DRAFT_258171</name>
</gene>
<name>LP9C_ASPTM</name>
<proteinExistence type="evidence at protein level"/>
<keyword id="KW-0119">Carbohydrate metabolism</keyword>
<keyword id="KW-0136">Cellulose degradation</keyword>
<keyword id="KW-0186">Copper</keyword>
<keyword id="KW-1015">Disulfide bond</keyword>
<keyword id="KW-0479">Metal-binding</keyword>
<keyword id="KW-0503">Monooxygenase</keyword>
<keyword id="KW-0560">Oxidoreductase</keyword>
<keyword id="KW-0624">Polysaccharide degradation</keyword>
<keyword id="KW-1185">Reference proteome</keyword>
<keyword id="KW-0964">Secreted</keyword>
<keyword id="KW-0732">Signal</keyword>
<comment type="function">
    <text evidence="7">Lytic polysaccharide monooxygenase (LPMO) that depolymerizes crystalline and amorphous polysaccharides via the oxidation of scissile alpha- or beta-(1-4)-glycosidic bonds, yielding C1 or C4 oxidation products (Probable). Catalysis by LPMOs requires the reduction of the active-site copper from Cu(II) to Cu(I) by a reducing agent and H(2)O(2) or O(2) as a cosubstrate (Probable).</text>
</comment>
<comment type="catalytic activity">
    <reaction evidence="7">
        <text>[(1-&gt;4)-beta-D-glucosyl]n+m + reduced acceptor + O2 = 4-dehydro-beta-D-glucosyl-[(1-&gt;4)-beta-D-glucosyl]n-1 + [(1-&gt;4)-beta-D-glucosyl]m + acceptor + H2O.</text>
        <dbReference type="EC" id="1.14.99.56"/>
    </reaction>
</comment>
<comment type="cofactor">
    <cofactor evidence="2">
        <name>Cu(2+)</name>
        <dbReference type="ChEBI" id="CHEBI:29036"/>
    </cofactor>
    <text evidence="2">Binds 1 copper ion per subunit.</text>
</comment>
<comment type="subcellular location">
    <subcellularLocation>
        <location evidence="7">Secreted</location>
    </subcellularLocation>
</comment>
<comment type="induction">
    <text evidence="4">Expression is up-regulated on steam-exploded bagasse as carbon source compared to glucose.</text>
</comment>
<comment type="biotechnology">
    <text evidence="2">Lignocellulose is the most abundant polymeric composite on Earth and is a recalcitrant but promising renewable substrate for industrial biotechnology applications. Together with cellobiose dehydrogenases (CDHs) an enzymatic system capable of oxidative cellulose cleavage is formed, which increases the efficiency of cellulases and put LPMOs at focus of biofuel research.</text>
</comment>
<comment type="similarity">
    <text evidence="6">Belongs to the polysaccharide monooxygenase AA9 family.</text>
</comment>